<proteinExistence type="inferred from homology"/>
<evidence type="ECO:0000250" key="1"/>
<evidence type="ECO:0000255" key="2">
    <source>
        <dbReference type="PROSITE-ProRule" id="PRU00539"/>
    </source>
</evidence>
<evidence type="ECO:0000305" key="3"/>
<protein>
    <recommendedName>
        <fullName>RNA-directed RNA polymerase</fullName>
        <ecNumber>2.7.7.48</ecNumber>
    </recommendedName>
    <alternativeName>
        <fullName>Protein VP1</fullName>
    </alternativeName>
</protein>
<organismHost>
    <name type="scientific">Homo sapiens</name>
    <name type="common">Human</name>
    <dbReference type="NCBI Taxonomy" id="9606"/>
</organismHost>
<dbReference type="EC" id="2.7.7.48"/>
<dbReference type="EMBL" id="DQ870497">
    <property type="protein sequence ID" value="ABI60852.1"/>
    <property type="molecule type" value="Genomic_RNA"/>
</dbReference>
<dbReference type="SMR" id="A7J3A2"/>
<dbReference type="GO" id="GO:0044423">
    <property type="term" value="C:virion component"/>
    <property type="evidence" value="ECO:0007669"/>
    <property type="project" value="UniProtKB-KW"/>
</dbReference>
<dbReference type="GO" id="GO:0000166">
    <property type="term" value="F:nucleotide binding"/>
    <property type="evidence" value="ECO:0007669"/>
    <property type="project" value="UniProtKB-KW"/>
</dbReference>
<dbReference type="GO" id="GO:0003723">
    <property type="term" value="F:RNA binding"/>
    <property type="evidence" value="ECO:0007669"/>
    <property type="project" value="UniProtKB-KW"/>
</dbReference>
<dbReference type="GO" id="GO:0003968">
    <property type="term" value="F:RNA-directed RNA polymerase activity"/>
    <property type="evidence" value="ECO:0007669"/>
    <property type="project" value="UniProtKB-KW"/>
</dbReference>
<dbReference type="GO" id="GO:0006351">
    <property type="term" value="P:DNA-templated transcription"/>
    <property type="evidence" value="ECO:0007669"/>
    <property type="project" value="InterPro"/>
</dbReference>
<dbReference type="GO" id="GO:0019079">
    <property type="term" value="P:viral genome replication"/>
    <property type="evidence" value="ECO:0007669"/>
    <property type="project" value="InterPro"/>
</dbReference>
<dbReference type="Gene3D" id="1.10.357.80">
    <property type="match status" value="2"/>
</dbReference>
<dbReference type="Gene3D" id="1.20.120.1390">
    <property type="match status" value="1"/>
</dbReference>
<dbReference type="Gene3D" id="3.30.230.140">
    <property type="match status" value="2"/>
</dbReference>
<dbReference type="Gene3D" id="3.30.70.2480">
    <property type="match status" value="1"/>
</dbReference>
<dbReference type="Gene3D" id="1.10.10.1990">
    <property type="entry name" value="Viral RNA-directed RNA polymerase, 4-helical domain"/>
    <property type="match status" value="1"/>
</dbReference>
<dbReference type="InterPro" id="IPR043502">
    <property type="entry name" value="DNA/RNA_pol_sf"/>
</dbReference>
<dbReference type="InterPro" id="IPR042032">
    <property type="entry name" value="RNA-dir_pol_4-hel_dom"/>
</dbReference>
<dbReference type="InterPro" id="IPR001795">
    <property type="entry name" value="RNA-dir_pol_luteovirus"/>
</dbReference>
<dbReference type="InterPro" id="IPR007097">
    <property type="entry name" value="RNA-dir_pol_reovirus"/>
</dbReference>
<dbReference type="InterPro" id="IPR022071">
    <property type="entry name" value="Rotavirus_VP1_C"/>
</dbReference>
<dbReference type="Pfam" id="PF02123">
    <property type="entry name" value="RdRP_4"/>
    <property type="match status" value="1"/>
</dbReference>
<dbReference type="Pfam" id="PF12289">
    <property type="entry name" value="Rotavirus_VP1"/>
    <property type="match status" value="1"/>
</dbReference>
<dbReference type="SUPFAM" id="SSF56672">
    <property type="entry name" value="DNA/RNA polymerases"/>
    <property type="match status" value="1"/>
</dbReference>
<dbReference type="PROSITE" id="PS50523">
    <property type="entry name" value="RDRP_DSRNA_REO"/>
    <property type="match status" value="1"/>
</dbReference>
<feature type="chain" id="PRO_0000368042" description="RNA-directed RNA polymerase">
    <location>
        <begin position="1"/>
        <end position="1088"/>
    </location>
</feature>
<feature type="domain" description="RdRp catalytic" evidence="2">
    <location>
        <begin position="501"/>
        <end position="687"/>
    </location>
</feature>
<sequence length="1088" mass="125166">MGKYNLILSEYLSFVYNSQSAVQIPIYYSSNSELEKRCIDFHVKCVDYSKRGLSLKSLFEEYKDVIDDATLLSILSYSYDKYNAVERKLINYAKGKPLEADLTVNELDYENNKITSELFQSAEEYTDSLMDPAILTSLSSNLNAVMFWLERHSNDVADANKIYKRRLDLFIIVASTINKYGVPRHNEKYRYDYDVMKDKPYYLVTWANSAIEMLMSVFSHEDYLIAKELIVLSYSNRSTLAKLVSSPMSILVALIDINGTFITNEELELEFSDKYVKAIVPDQTFNELQEMIDNMKKAGLVDIPRMIQEWLIDCSLEKFTLMSKIYSWSFHVGFRKQKMIDAALDQLKTEYTDDVDNEMYYEYTMLIRDEIVKMLEIPVKHDDHLLQDSELAGLLSMSSASNGESRQLKFGRKTIFSTKKNMHVMDDIAHGRYTPGVIPPVNVDRPIPLGRRDVPGRRTRIIFILPYEYFIAQHAVVEKMLSYAKHTREYAEFYSQSNQLLSYGDVTRFLSSNSMVLYTDVSQWDSSQHNTQPFRKGIIMGLDMLTNMTNDPKVVHTLNLYKQTQINLMDSYVQIPDGDVIKKIQYGAVASGEKQTKAANSIANLALIKTVLSRIANKYSFITKIIRVDGDDNYAVLQFNTDVTKQMVQEVSDDVRYIYSRMNAKVKALVSTVGIEIAKRYIAGGKIFFRAGINLLNNEKRGQSTQWDQAAILYSNYIVNKLRGFETDREFILTKIIQMTSVAITGSLRLFPSERVLTTNSTFKVFDSEDFIIEYGTTDDEVYIQRAFMSLSSQKSGIADEIASSQTFKNYVSKLSDQLLVSKNTIVSKGIAVTEKAKLNSYAPVYLEKRRAQISALLTMLQKPVSFKSNKITINDILRDIKPFFVTTEANLPIQYRKFMPTLPDNVQYVIQCIGSRTYQIEDSGSKSSISKLISKYSVYKPSIEELYKVISLREREIQLYLVSLGVPLIDASTYVGSRIYSQDKYKILESYVYNLLSINYGCYQLFDFNSPDLEKLIRIPFKGKIPAVTFILHLYAKLEIINHAIKNRAWISLFCNYPKSEMIKLWKKMWNITALRSPYTSANFFQD</sequence>
<name>RDRP_ROTYO</name>
<comment type="function">
    <text evidence="2">RNA-directed RNA polymerase that is involved in both transcription and genome replication. Together with VP3 capping enzyme, forms an enzyme complex positioned near the channels situated at each of the five-fold vertices of the core. Following infection, the outermost layer of the virus is lost, leaving a double-layered particle (DLP) made up of the core and VP6 shell. VP1 then catalyzes the transcription of fully conservative plus-strand genomic RNAs that are extruded through the DLP's channels into the cytoplasm where they function as mRNAs for translation of viral proteins. One copy of each of the viral (+)RNAs is also recruited during core assembly, together with newly synthesized polymerase complexes and VP2. The polymerase of these novo-formed particles catalyzes the synthesis of complementary minus-strands leading to dsRNA formation. To do so, the polymerase specifically recognizes and binds 4 bases 5'-UGUG-3' in the conserved 3'-sequence of plus-strand RNA templates. VP2 presumably activates the autoinhibited VP1-RNA complex to coordinate packaging and genome replication. Once dsRNA synthesis is complete, the polymerase switches to the transcriptional mode, thus providing secondary transcription (By similarity).</text>
</comment>
<comment type="catalytic activity">
    <reaction evidence="2">
        <text>RNA(n) + a ribonucleoside 5'-triphosphate = RNA(n+1) + diphosphate</text>
        <dbReference type="Rhea" id="RHEA:21248"/>
        <dbReference type="Rhea" id="RHEA-COMP:14527"/>
        <dbReference type="Rhea" id="RHEA-COMP:17342"/>
        <dbReference type="ChEBI" id="CHEBI:33019"/>
        <dbReference type="ChEBI" id="CHEBI:61557"/>
        <dbReference type="ChEBI" id="CHEBI:140395"/>
        <dbReference type="EC" id="2.7.7.48"/>
    </reaction>
</comment>
<comment type="cofactor">
    <cofactor evidence="3">
        <name>Mg(2+)</name>
        <dbReference type="ChEBI" id="CHEBI:18420"/>
    </cofactor>
</comment>
<comment type="subunit">
    <text evidence="1 3">Interacts with VP3 (Potential). Interacts with VP2; this interaction activates VP1. Interacts with NSP5; this interaction is probably necessary for the formation of functional virus factories. Interacts with NSP2; this interaction is weak (By similarity).</text>
</comment>
<comment type="subcellular location">
    <subcellularLocation>
        <location evidence="3">Virion</location>
    </subcellularLocation>
    <text evidence="1">Attached inside the inner capsid as a minor component. Also found in spherical cytoplasmic structures, called virus factories, that appear early after infection and are the site of viral replication and packaging (By similarity).</text>
</comment>
<comment type="similarity">
    <text evidence="3">Belongs to the reoviridae RNA-directed RNA polymerase family.</text>
</comment>
<keyword id="KW-0460">Magnesium</keyword>
<keyword id="KW-0547">Nucleotide-binding</keyword>
<keyword id="KW-0548">Nucleotidyltransferase</keyword>
<keyword id="KW-0694">RNA-binding</keyword>
<keyword id="KW-0696">RNA-directed RNA polymerase</keyword>
<keyword id="KW-0808">Transferase</keyword>
<keyword id="KW-0693">Viral RNA replication</keyword>
<keyword id="KW-0946">Virion</keyword>
<reference key="1">
    <citation type="journal article" date="2008" name="J. Virol.">
        <title>Full genome-based classification of rotaviruses reveals a common origin between human Wa-Like and porcine rotavirus strains and human DS-1-like and bovine rotavirus strains.</title>
        <authorList>
            <person name="Matthijnssens J."/>
            <person name="Ciarlet M."/>
            <person name="Heiman E.M."/>
            <person name="Arijs I."/>
            <person name="Delbeke T."/>
            <person name="McDonald S.M."/>
            <person name="Palombo E.A."/>
            <person name="Iturriza-Gomara M."/>
            <person name="Maes P."/>
            <person name="Patton J.T."/>
            <person name="Rahman M."/>
            <person name="Van Ranst M."/>
        </authorList>
    </citation>
    <scope>NUCLEOTIDE SEQUENCE [GENOMIC RNA]</scope>
</reference>
<accession>A7J3A2</accession>
<organism>
    <name type="scientific">Rotavirus A (strain RVA/Human/Japan/YO/1977/G3P1A[8])</name>
    <name type="common">RV-A</name>
    <dbReference type="NCBI Taxonomy" id="578832"/>
    <lineage>
        <taxon>Viruses</taxon>
        <taxon>Riboviria</taxon>
        <taxon>Orthornavirae</taxon>
        <taxon>Duplornaviricota</taxon>
        <taxon>Resentoviricetes</taxon>
        <taxon>Reovirales</taxon>
        <taxon>Sedoreoviridae</taxon>
        <taxon>Rotavirus</taxon>
        <taxon>Rotavirus A</taxon>
    </lineage>
</organism>